<sequence length="445" mass="51156">MKKYSICIVGGGSRYTPDMLAMLCNQKERFPLRKIVLYDNESERQETVGNYAKILFKEYYPELEEVIWTTDEKEAFEDIDFALMQIRAGRLKMREKDEKISLKHGCLGQETCGAGGFAYGLRSVPAVIDLIKSIRTYSPKCWILNYSNPAAIVAEATKRVFPNDYRIINICDMPIAIMDIYAAVLGLKRRDLEPKYFGLNHFGWFTHILDKKTGENYLPKLREILKTPVDVQTEPLFQEKSWKSTFEFMSQMINDYDEYLPNTYLQYYLYPAKMRNKENPEYTRANEVMDGNEKETYERMHKIISLGKIHGTKYELTSDVGCHAEYIVDLATAIANNTNEIFLIITENKGTINNVSKDMMVEVPCRVGSNGVEPLVVGSIPAFYKGLMENQYAYEKLSVDACLEGSYQKALQALVLNRTVVNTDVAKELLKDLIEANKGYWNELH</sequence>
<name>PAGL_CLOAB</name>
<dbReference type="EC" id="3.2.1.-"/>
<dbReference type="EMBL" id="AE001437">
    <property type="protein sequence ID" value="AAK81356.1"/>
    <property type="molecule type" value="Genomic_DNA"/>
</dbReference>
<dbReference type="PIR" id="A97321">
    <property type="entry name" value="A97321"/>
</dbReference>
<dbReference type="RefSeq" id="NP_350016.1">
    <property type="nucleotide sequence ID" value="NC_003030.1"/>
</dbReference>
<dbReference type="RefSeq" id="WP_010966696.1">
    <property type="nucleotide sequence ID" value="NC_003030.1"/>
</dbReference>
<dbReference type="SMR" id="Q97DP6"/>
<dbReference type="STRING" id="272562.CA_C3426"/>
<dbReference type="CAZy" id="GH4">
    <property type="family name" value="Glycoside Hydrolase Family 4"/>
</dbReference>
<dbReference type="KEGG" id="cac:CA_C3426"/>
<dbReference type="PATRIC" id="fig|272562.8.peg.3608"/>
<dbReference type="eggNOG" id="COG1486">
    <property type="taxonomic scope" value="Bacteria"/>
</dbReference>
<dbReference type="HOGENOM" id="CLU_045951_2_0_9"/>
<dbReference type="OrthoDB" id="9808275at2"/>
<dbReference type="SABIO-RK" id="Q97DP6"/>
<dbReference type="Proteomes" id="UP000000814">
    <property type="component" value="Chromosome"/>
</dbReference>
<dbReference type="GO" id="GO:0004553">
    <property type="term" value="F:hydrolase activity, hydrolyzing O-glycosyl compounds"/>
    <property type="evidence" value="ECO:0007669"/>
    <property type="project" value="InterPro"/>
</dbReference>
<dbReference type="GO" id="GO:0046872">
    <property type="term" value="F:metal ion binding"/>
    <property type="evidence" value="ECO:0007669"/>
    <property type="project" value="UniProtKB-KW"/>
</dbReference>
<dbReference type="GO" id="GO:0016616">
    <property type="term" value="F:oxidoreductase activity, acting on the CH-OH group of donors, NAD or NADP as acceptor"/>
    <property type="evidence" value="ECO:0007669"/>
    <property type="project" value="InterPro"/>
</dbReference>
<dbReference type="GO" id="GO:0005975">
    <property type="term" value="P:carbohydrate metabolic process"/>
    <property type="evidence" value="ECO:0007669"/>
    <property type="project" value="InterPro"/>
</dbReference>
<dbReference type="CDD" id="cd05298">
    <property type="entry name" value="GH4_GlvA_pagL_like"/>
    <property type="match status" value="1"/>
</dbReference>
<dbReference type="Gene3D" id="3.90.110.10">
    <property type="entry name" value="Lactate dehydrogenase/glycoside hydrolase, family 4, C-terminal"/>
    <property type="match status" value="1"/>
</dbReference>
<dbReference type="Gene3D" id="3.40.50.720">
    <property type="entry name" value="NAD(P)-binding Rossmann-like Domain"/>
    <property type="match status" value="1"/>
</dbReference>
<dbReference type="InterPro" id="IPR019802">
    <property type="entry name" value="GlycHydrolase_4_CS"/>
</dbReference>
<dbReference type="InterPro" id="IPR001088">
    <property type="entry name" value="Glyco_hydro_4"/>
</dbReference>
<dbReference type="InterPro" id="IPR022616">
    <property type="entry name" value="Glyco_hydro_4_C"/>
</dbReference>
<dbReference type="InterPro" id="IPR015955">
    <property type="entry name" value="Lactate_DH/Glyco_Ohase_4_C"/>
</dbReference>
<dbReference type="InterPro" id="IPR036291">
    <property type="entry name" value="NAD(P)-bd_dom_sf"/>
</dbReference>
<dbReference type="PANTHER" id="PTHR32092">
    <property type="entry name" value="6-PHOSPHO-BETA-GLUCOSIDASE-RELATED"/>
    <property type="match status" value="1"/>
</dbReference>
<dbReference type="PANTHER" id="PTHR32092:SF14">
    <property type="entry name" value="MALTOSE-6'-PHOSPHATE GLUCOSIDASE"/>
    <property type="match status" value="1"/>
</dbReference>
<dbReference type="Pfam" id="PF02056">
    <property type="entry name" value="Glyco_hydro_4"/>
    <property type="match status" value="1"/>
</dbReference>
<dbReference type="Pfam" id="PF11975">
    <property type="entry name" value="Glyco_hydro_4C"/>
    <property type="match status" value="1"/>
</dbReference>
<dbReference type="PRINTS" id="PR00732">
    <property type="entry name" value="GLHYDRLASE4"/>
</dbReference>
<dbReference type="SUPFAM" id="SSF56327">
    <property type="entry name" value="LDH C-terminal domain-like"/>
    <property type="match status" value="1"/>
</dbReference>
<dbReference type="SUPFAM" id="SSF51735">
    <property type="entry name" value="NAD(P)-binding Rossmann-fold domains"/>
    <property type="match status" value="1"/>
</dbReference>
<dbReference type="PROSITE" id="PS01324">
    <property type="entry name" value="GLYCOSYL_HYDROL_F4"/>
    <property type="match status" value="1"/>
</dbReference>
<gene>
    <name type="primary">pagL</name>
    <name type="ordered locus">CA_C3426</name>
</gene>
<protein>
    <recommendedName>
        <fullName>Phospho-alpha-glucosidase PagL</fullName>
        <ecNumber>3.2.1.-</ecNumber>
    </recommendedName>
</protein>
<feature type="chain" id="PRO_0000169865" description="Phospho-alpha-glucosidase PagL">
    <location>
        <begin position="1"/>
        <end position="445"/>
    </location>
</feature>
<feature type="active site" description="Proton donor" evidence="1">
    <location>
        <position position="172"/>
    </location>
</feature>
<feature type="active site" description="Proton acceptor" evidence="1">
    <location>
        <position position="264"/>
    </location>
</feature>
<feature type="binding site" evidence="1">
    <location>
        <begin position="4"/>
        <end position="71"/>
    </location>
    <ligand>
        <name>NAD(+)</name>
        <dbReference type="ChEBI" id="CHEBI:57540"/>
    </ligand>
</feature>
<feature type="binding site" evidence="1">
    <location>
        <position position="94"/>
    </location>
    <ligand>
        <name>substrate</name>
    </ligand>
</feature>
<feature type="binding site" evidence="1">
    <location>
        <position position="148"/>
    </location>
    <ligand>
        <name>substrate</name>
    </ligand>
</feature>
<feature type="binding site" evidence="1">
    <location>
        <position position="171"/>
    </location>
    <ligand>
        <name>Mn(2+)</name>
        <dbReference type="ChEBI" id="CHEBI:29035"/>
    </ligand>
</feature>
<feature type="binding site" evidence="1">
    <location>
        <position position="201"/>
    </location>
    <ligand>
        <name>Mn(2+)</name>
        <dbReference type="ChEBI" id="CHEBI:29035"/>
    </ligand>
</feature>
<feature type="binding site" evidence="1">
    <location>
        <position position="284"/>
    </location>
    <ligand>
        <name>substrate</name>
    </ligand>
</feature>
<feature type="site" description="Increases basicity of active site Tyr" evidence="1">
    <location>
        <position position="110"/>
    </location>
</feature>
<accession>Q97DP6</accession>
<organism>
    <name type="scientific">Clostridium acetobutylicum (strain ATCC 824 / DSM 792 / JCM 1419 / IAM 19013 / LMG 5710 / NBRC 13948 / NRRL B-527 / VKM B-1787 / 2291 / W)</name>
    <dbReference type="NCBI Taxonomy" id="272562"/>
    <lineage>
        <taxon>Bacteria</taxon>
        <taxon>Bacillati</taxon>
        <taxon>Bacillota</taxon>
        <taxon>Clostridia</taxon>
        <taxon>Eubacteriales</taxon>
        <taxon>Clostridiaceae</taxon>
        <taxon>Clostridium</taxon>
    </lineage>
</organism>
<comment type="function">
    <text>Phospho-alpha-glucosidase that catalyzes the hydrolysis of p-nitrophenyl-alpha-D-glucopyranoside 6-phosphate, but is not able to cleave 'natural' phospho-alpha-glucosides produced via the phosphoenolpyruvate-dependent sugar phosphotransferase system (PEP-PTS).</text>
</comment>
<comment type="cofactor">
    <cofactor>
        <name>NAD(+)</name>
        <dbReference type="ChEBI" id="CHEBI:57540"/>
    </cofactor>
    <text>Binds 1 NAD(+) per subunit.</text>
</comment>
<comment type="cofactor">
    <cofactor>
        <name>Mn(2+)</name>
        <dbReference type="ChEBI" id="CHEBI:29035"/>
    </cofactor>
    <text>Binds 1 Mn(2+) ion per subunit.</text>
</comment>
<comment type="biophysicochemical properties">
    <kinetics>
        <KM evidence="2">58.3 uM for p-nitrophenyl-alpha-D-glucopyranoside 6-phosphate</KM>
        <Vmax evidence="2">4.4 umol/min/mg enzyme with p-nitrophenyl 6-phospho-alpha-D-glucoside as substrate</Vmax>
    </kinetics>
</comment>
<comment type="subunit">
    <text>Homotetramer.</text>
</comment>
<comment type="induction">
    <text>By maltose and methyl-alpha-D-glucoside.</text>
</comment>
<comment type="similarity">
    <text evidence="3">Belongs to the glycosyl hydrolase 4 family.</text>
</comment>
<proteinExistence type="evidence at protein level"/>
<evidence type="ECO:0000250" key="1"/>
<evidence type="ECO:0000269" key="2">
    <source>
    </source>
</evidence>
<evidence type="ECO:0000305" key="3"/>
<keyword id="KW-0903">Direct protein sequencing</keyword>
<keyword id="KW-0326">Glycosidase</keyword>
<keyword id="KW-0378">Hydrolase</keyword>
<keyword id="KW-0464">Manganese</keyword>
<keyword id="KW-0479">Metal-binding</keyword>
<keyword id="KW-0520">NAD</keyword>
<keyword id="KW-1185">Reference proteome</keyword>
<reference key="1">
    <citation type="journal article" date="2001" name="J. Bacteriol.">
        <title>Genome sequence and comparative analysis of the solvent-producing bacterium Clostridium acetobutylicum.</title>
        <authorList>
            <person name="Noelling J."/>
            <person name="Breton G."/>
            <person name="Omelchenko M.V."/>
            <person name="Makarova K.S."/>
            <person name="Zeng Q."/>
            <person name="Gibson R."/>
            <person name="Lee H.M."/>
            <person name="Dubois J."/>
            <person name="Qiu D."/>
            <person name="Hitti J."/>
            <person name="Wolf Y.I."/>
            <person name="Tatusov R.L."/>
            <person name="Sabathe F."/>
            <person name="Doucette-Stamm L.A."/>
            <person name="Soucaille P."/>
            <person name="Daly M.J."/>
            <person name="Bennett G.N."/>
            <person name="Koonin E.V."/>
            <person name="Smith D.R."/>
        </authorList>
    </citation>
    <scope>NUCLEOTIDE SEQUENCE [LARGE SCALE GENOMIC DNA]</scope>
    <source>
        <strain>ATCC 824 / DSM 792 / JCM 1419 / IAM 19013 / LMG 5710 / NBRC 13948 / NRRL B-527 / VKM B-1787 / 2291 / W</strain>
    </source>
</reference>
<reference key="2">
    <citation type="journal article" date="2004" name="J. Biol. Chem.">
        <title>Genes malh and pagl of Clostridium acetobutylicum ATCC 824 encode NAD+- and Mn2+-dependent phospho-alpha-glucosidase(s).</title>
        <authorList>
            <person name="Thompson J."/>
            <person name="Hess S."/>
            <person name="Pikis A."/>
        </authorList>
    </citation>
    <scope>PROTEIN SEQUENCE OF 1-29</scope>
    <scope>CHARACTERIZATION</scope>
    <scope>KINETIC PARAMETERS</scope>
    <source>
        <strain>ATCC 824 / DSM 792 / JCM 1419 / IAM 19013 / LMG 5710 / NBRC 13948 / NRRL B-527 / VKM B-1787 / 2291 / W</strain>
    </source>
</reference>